<dbReference type="EC" id="3.1.26.3" evidence="1"/>
<dbReference type="EMBL" id="CP000107">
    <property type="protein sequence ID" value="AAZ68878.1"/>
    <property type="molecule type" value="Genomic_DNA"/>
</dbReference>
<dbReference type="RefSeq" id="WP_011304955.1">
    <property type="nucleotide sequence ID" value="NC_007354.1"/>
</dbReference>
<dbReference type="SMR" id="Q3YQX7"/>
<dbReference type="FunCoup" id="Q3YQX7">
    <property type="interactions" value="287"/>
</dbReference>
<dbReference type="STRING" id="269484.Ecaj_0847"/>
<dbReference type="KEGG" id="ecn:Ecaj_0847"/>
<dbReference type="eggNOG" id="COG0571">
    <property type="taxonomic scope" value="Bacteria"/>
</dbReference>
<dbReference type="HOGENOM" id="CLU_000907_1_1_5"/>
<dbReference type="InParanoid" id="Q3YQX7"/>
<dbReference type="Proteomes" id="UP000000435">
    <property type="component" value="Chromosome"/>
</dbReference>
<dbReference type="GO" id="GO:0005737">
    <property type="term" value="C:cytoplasm"/>
    <property type="evidence" value="ECO:0007669"/>
    <property type="project" value="UniProtKB-SubCell"/>
</dbReference>
<dbReference type="GO" id="GO:0003725">
    <property type="term" value="F:double-stranded RNA binding"/>
    <property type="evidence" value="ECO:0007669"/>
    <property type="project" value="TreeGrafter"/>
</dbReference>
<dbReference type="GO" id="GO:0046872">
    <property type="term" value="F:metal ion binding"/>
    <property type="evidence" value="ECO:0007669"/>
    <property type="project" value="UniProtKB-KW"/>
</dbReference>
<dbReference type="GO" id="GO:0004525">
    <property type="term" value="F:ribonuclease III activity"/>
    <property type="evidence" value="ECO:0007669"/>
    <property type="project" value="UniProtKB-UniRule"/>
</dbReference>
<dbReference type="GO" id="GO:0019843">
    <property type="term" value="F:rRNA binding"/>
    <property type="evidence" value="ECO:0007669"/>
    <property type="project" value="UniProtKB-KW"/>
</dbReference>
<dbReference type="GO" id="GO:0006397">
    <property type="term" value="P:mRNA processing"/>
    <property type="evidence" value="ECO:0007669"/>
    <property type="project" value="UniProtKB-UniRule"/>
</dbReference>
<dbReference type="GO" id="GO:0010468">
    <property type="term" value="P:regulation of gene expression"/>
    <property type="evidence" value="ECO:0007669"/>
    <property type="project" value="TreeGrafter"/>
</dbReference>
<dbReference type="GO" id="GO:0006364">
    <property type="term" value="P:rRNA processing"/>
    <property type="evidence" value="ECO:0007669"/>
    <property type="project" value="UniProtKB-UniRule"/>
</dbReference>
<dbReference type="GO" id="GO:0008033">
    <property type="term" value="P:tRNA processing"/>
    <property type="evidence" value="ECO:0007669"/>
    <property type="project" value="UniProtKB-KW"/>
</dbReference>
<dbReference type="CDD" id="cd10845">
    <property type="entry name" value="DSRM_RNAse_III_family"/>
    <property type="match status" value="1"/>
</dbReference>
<dbReference type="CDD" id="cd00593">
    <property type="entry name" value="RIBOc"/>
    <property type="match status" value="1"/>
</dbReference>
<dbReference type="FunFam" id="1.10.1520.10:FF:000001">
    <property type="entry name" value="Ribonuclease 3"/>
    <property type="match status" value="1"/>
</dbReference>
<dbReference type="Gene3D" id="3.30.160.20">
    <property type="match status" value="1"/>
</dbReference>
<dbReference type="Gene3D" id="1.10.1520.10">
    <property type="entry name" value="Ribonuclease III domain"/>
    <property type="match status" value="1"/>
</dbReference>
<dbReference type="HAMAP" id="MF_00104">
    <property type="entry name" value="RNase_III"/>
    <property type="match status" value="1"/>
</dbReference>
<dbReference type="InterPro" id="IPR014720">
    <property type="entry name" value="dsRBD_dom"/>
</dbReference>
<dbReference type="InterPro" id="IPR011907">
    <property type="entry name" value="RNase_III"/>
</dbReference>
<dbReference type="InterPro" id="IPR000999">
    <property type="entry name" value="RNase_III_dom"/>
</dbReference>
<dbReference type="InterPro" id="IPR036389">
    <property type="entry name" value="RNase_III_sf"/>
</dbReference>
<dbReference type="NCBIfam" id="TIGR02191">
    <property type="entry name" value="RNaseIII"/>
    <property type="match status" value="1"/>
</dbReference>
<dbReference type="PANTHER" id="PTHR11207:SF0">
    <property type="entry name" value="RIBONUCLEASE 3"/>
    <property type="match status" value="1"/>
</dbReference>
<dbReference type="PANTHER" id="PTHR11207">
    <property type="entry name" value="RIBONUCLEASE III"/>
    <property type="match status" value="1"/>
</dbReference>
<dbReference type="Pfam" id="PF00035">
    <property type="entry name" value="dsrm"/>
    <property type="match status" value="1"/>
</dbReference>
<dbReference type="Pfam" id="PF14622">
    <property type="entry name" value="Ribonucleas_3_3"/>
    <property type="match status" value="1"/>
</dbReference>
<dbReference type="SMART" id="SM00358">
    <property type="entry name" value="DSRM"/>
    <property type="match status" value="1"/>
</dbReference>
<dbReference type="SMART" id="SM00535">
    <property type="entry name" value="RIBOc"/>
    <property type="match status" value="1"/>
</dbReference>
<dbReference type="SUPFAM" id="SSF54768">
    <property type="entry name" value="dsRNA-binding domain-like"/>
    <property type="match status" value="1"/>
</dbReference>
<dbReference type="SUPFAM" id="SSF69065">
    <property type="entry name" value="RNase III domain-like"/>
    <property type="match status" value="1"/>
</dbReference>
<dbReference type="PROSITE" id="PS50137">
    <property type="entry name" value="DS_RBD"/>
    <property type="match status" value="1"/>
</dbReference>
<dbReference type="PROSITE" id="PS00517">
    <property type="entry name" value="RNASE_3_1"/>
    <property type="match status" value="1"/>
</dbReference>
<dbReference type="PROSITE" id="PS50142">
    <property type="entry name" value="RNASE_3_2"/>
    <property type="match status" value="1"/>
</dbReference>
<sequence>MIETISKTIKYHFKNPQLLHEALTHPSIISKDSLKFNYERLEFLGDAVLNIVISEMLFNIFPKDTEGNLAKKKTALVCGNQLVKVAQSINLGQFIIMSDGERTCGGANNHNNLENALEALIGAIYLDGGLTAAQNFIHSFWKHTAIHMDIPPQDAKTILQEFIQGKRLPAPTYHIIDKSGPDHNPIFTVELRIPLYKTIQATGNNKKLAEQKAASLMLNQIKDQIK</sequence>
<comment type="function">
    <text evidence="1">Digests double-stranded RNA. Involved in the processing of primary rRNA transcript to yield the immediate precursors to the large and small rRNAs (23S and 16S). Processes some mRNAs, and tRNAs when they are encoded in the rRNA operon. Processes pre-crRNA and tracrRNA of type II CRISPR loci if present in the organism.</text>
</comment>
<comment type="catalytic activity">
    <reaction evidence="1">
        <text>Endonucleolytic cleavage to 5'-phosphomonoester.</text>
        <dbReference type="EC" id="3.1.26.3"/>
    </reaction>
</comment>
<comment type="cofactor">
    <cofactor evidence="1">
        <name>Mg(2+)</name>
        <dbReference type="ChEBI" id="CHEBI:18420"/>
    </cofactor>
</comment>
<comment type="subunit">
    <text evidence="1">Homodimer.</text>
</comment>
<comment type="subcellular location">
    <subcellularLocation>
        <location evidence="1">Cytoplasm</location>
    </subcellularLocation>
</comment>
<comment type="similarity">
    <text evidence="1">Belongs to the ribonuclease III family.</text>
</comment>
<accession>Q3YQX7</accession>
<protein>
    <recommendedName>
        <fullName evidence="1">Ribonuclease 3</fullName>
        <ecNumber evidence="1">3.1.26.3</ecNumber>
    </recommendedName>
    <alternativeName>
        <fullName evidence="1">Ribonuclease III</fullName>
        <shortName evidence="1">RNase III</shortName>
    </alternativeName>
</protein>
<gene>
    <name evidence="1" type="primary">rnc</name>
    <name type="ordered locus">Ecaj_0847</name>
</gene>
<name>RNC_EHRCJ</name>
<reference key="1">
    <citation type="journal article" date="2006" name="J. Bacteriol.">
        <title>The genome of the obligately intracellular bacterium Ehrlichia canis reveals themes of complex membrane structure and immune evasion strategies.</title>
        <authorList>
            <person name="Mavromatis K."/>
            <person name="Doyle C.K."/>
            <person name="Lykidis A."/>
            <person name="Ivanova N."/>
            <person name="Francino M.P."/>
            <person name="Chain P."/>
            <person name="Shin M."/>
            <person name="Malfatti S."/>
            <person name="Larimer F."/>
            <person name="Copeland A."/>
            <person name="Detter J.C."/>
            <person name="Land M."/>
            <person name="Richardson P.M."/>
            <person name="Yu X.J."/>
            <person name="Walker D.H."/>
            <person name="McBride J.W."/>
            <person name="Kyrpides N.C."/>
        </authorList>
    </citation>
    <scope>NUCLEOTIDE SEQUENCE [LARGE SCALE GENOMIC DNA]</scope>
    <source>
        <strain>Jake</strain>
    </source>
</reference>
<evidence type="ECO:0000255" key="1">
    <source>
        <dbReference type="HAMAP-Rule" id="MF_00104"/>
    </source>
</evidence>
<keyword id="KW-0963">Cytoplasm</keyword>
<keyword id="KW-0255">Endonuclease</keyword>
<keyword id="KW-0378">Hydrolase</keyword>
<keyword id="KW-0460">Magnesium</keyword>
<keyword id="KW-0479">Metal-binding</keyword>
<keyword id="KW-0507">mRNA processing</keyword>
<keyword id="KW-0540">Nuclease</keyword>
<keyword id="KW-0694">RNA-binding</keyword>
<keyword id="KW-0698">rRNA processing</keyword>
<keyword id="KW-0699">rRNA-binding</keyword>
<keyword id="KW-0819">tRNA processing</keyword>
<feature type="chain" id="PRO_0000228527" description="Ribonuclease 3">
    <location>
        <begin position="1"/>
        <end position="226"/>
    </location>
</feature>
<feature type="domain" description="RNase III" evidence="1">
    <location>
        <begin position="2"/>
        <end position="129"/>
    </location>
</feature>
<feature type="domain" description="DRBM" evidence="1">
    <location>
        <begin position="154"/>
        <end position="223"/>
    </location>
</feature>
<feature type="active site" evidence="1">
    <location>
        <position position="46"/>
    </location>
</feature>
<feature type="active site" evidence="1">
    <location>
        <position position="118"/>
    </location>
</feature>
<feature type="binding site" evidence="1">
    <location>
        <position position="42"/>
    </location>
    <ligand>
        <name>Mg(2+)</name>
        <dbReference type="ChEBI" id="CHEBI:18420"/>
    </ligand>
</feature>
<feature type="binding site" evidence="1">
    <location>
        <position position="115"/>
    </location>
    <ligand>
        <name>Mg(2+)</name>
        <dbReference type="ChEBI" id="CHEBI:18420"/>
    </ligand>
</feature>
<feature type="binding site" evidence="1">
    <location>
        <position position="118"/>
    </location>
    <ligand>
        <name>Mg(2+)</name>
        <dbReference type="ChEBI" id="CHEBI:18420"/>
    </ligand>
</feature>
<proteinExistence type="inferred from homology"/>
<organism>
    <name type="scientific">Ehrlichia canis (strain Jake)</name>
    <dbReference type="NCBI Taxonomy" id="269484"/>
    <lineage>
        <taxon>Bacteria</taxon>
        <taxon>Pseudomonadati</taxon>
        <taxon>Pseudomonadota</taxon>
        <taxon>Alphaproteobacteria</taxon>
        <taxon>Rickettsiales</taxon>
        <taxon>Anaplasmataceae</taxon>
        <taxon>Ehrlichia</taxon>
    </lineage>
</organism>